<feature type="chain" id="PRO_0000301222" description="Sec-independent protein translocase protein TatB">
    <location>
        <begin position="1"/>
        <end position="158"/>
    </location>
</feature>
<feature type="transmembrane region" description="Helical" evidence="1">
    <location>
        <begin position="1"/>
        <end position="21"/>
    </location>
</feature>
<feature type="region of interest" description="Disordered" evidence="2">
    <location>
        <begin position="73"/>
        <end position="158"/>
    </location>
</feature>
<feature type="compositionally biased region" description="Basic and acidic residues" evidence="2">
    <location>
        <begin position="83"/>
        <end position="92"/>
    </location>
</feature>
<feature type="compositionally biased region" description="Low complexity" evidence="2">
    <location>
        <begin position="94"/>
        <end position="132"/>
    </location>
</feature>
<feature type="compositionally biased region" description="Low complexity" evidence="2">
    <location>
        <begin position="138"/>
        <end position="158"/>
    </location>
</feature>
<dbReference type="EMBL" id="CP000577">
    <property type="protein sequence ID" value="ABN76310.1"/>
    <property type="molecule type" value="Genomic_DNA"/>
</dbReference>
<dbReference type="RefSeq" id="WP_002719691.1">
    <property type="nucleotide sequence ID" value="NC_009049.1"/>
</dbReference>
<dbReference type="SMR" id="A3PIZ4"/>
<dbReference type="GeneID" id="67446294"/>
<dbReference type="KEGG" id="rsh:Rsph17029_1200"/>
<dbReference type="HOGENOM" id="CLU_086034_1_3_5"/>
<dbReference type="GO" id="GO:0033281">
    <property type="term" value="C:TAT protein transport complex"/>
    <property type="evidence" value="ECO:0007669"/>
    <property type="project" value="UniProtKB-UniRule"/>
</dbReference>
<dbReference type="GO" id="GO:0008320">
    <property type="term" value="F:protein transmembrane transporter activity"/>
    <property type="evidence" value="ECO:0007669"/>
    <property type="project" value="UniProtKB-UniRule"/>
</dbReference>
<dbReference type="GO" id="GO:0043953">
    <property type="term" value="P:protein transport by the Tat complex"/>
    <property type="evidence" value="ECO:0007669"/>
    <property type="project" value="UniProtKB-UniRule"/>
</dbReference>
<dbReference type="Gene3D" id="1.20.5.3310">
    <property type="match status" value="1"/>
</dbReference>
<dbReference type="HAMAP" id="MF_00237">
    <property type="entry name" value="TatB"/>
    <property type="match status" value="1"/>
</dbReference>
<dbReference type="InterPro" id="IPR003369">
    <property type="entry name" value="TatA/B/E"/>
</dbReference>
<dbReference type="InterPro" id="IPR018448">
    <property type="entry name" value="TatB"/>
</dbReference>
<dbReference type="NCBIfam" id="TIGR01410">
    <property type="entry name" value="tatB"/>
    <property type="match status" value="1"/>
</dbReference>
<dbReference type="PANTHER" id="PTHR33162">
    <property type="entry name" value="SEC-INDEPENDENT PROTEIN TRANSLOCASE PROTEIN TATA, CHLOROPLASTIC"/>
    <property type="match status" value="1"/>
</dbReference>
<dbReference type="PANTHER" id="PTHR33162:SF1">
    <property type="entry name" value="SEC-INDEPENDENT PROTEIN TRANSLOCASE PROTEIN TATA, CHLOROPLASTIC"/>
    <property type="match status" value="1"/>
</dbReference>
<dbReference type="Pfam" id="PF02416">
    <property type="entry name" value="TatA_B_E"/>
    <property type="match status" value="1"/>
</dbReference>
<dbReference type="PRINTS" id="PR01506">
    <property type="entry name" value="TATBPROTEIN"/>
</dbReference>
<name>TATB_CERS1</name>
<accession>A3PIZ4</accession>
<gene>
    <name evidence="1" type="primary">tatB</name>
    <name type="ordered locus">Rsph17029_1200</name>
</gene>
<keyword id="KW-0997">Cell inner membrane</keyword>
<keyword id="KW-1003">Cell membrane</keyword>
<keyword id="KW-0472">Membrane</keyword>
<keyword id="KW-0653">Protein transport</keyword>
<keyword id="KW-0811">Translocation</keyword>
<keyword id="KW-0812">Transmembrane</keyword>
<keyword id="KW-1133">Transmembrane helix</keyword>
<keyword id="KW-0813">Transport</keyword>
<reference key="1">
    <citation type="submission" date="2007-02" db="EMBL/GenBank/DDBJ databases">
        <title>Complete sequence of chromosome 1 of Rhodobacter sphaeroides ATCC 17029.</title>
        <authorList>
            <person name="Copeland A."/>
            <person name="Lucas S."/>
            <person name="Lapidus A."/>
            <person name="Barry K."/>
            <person name="Detter J.C."/>
            <person name="Glavina del Rio T."/>
            <person name="Hammon N."/>
            <person name="Israni S."/>
            <person name="Dalin E."/>
            <person name="Tice H."/>
            <person name="Pitluck S."/>
            <person name="Kiss H."/>
            <person name="Brettin T."/>
            <person name="Bruce D."/>
            <person name="Han C."/>
            <person name="Tapia R."/>
            <person name="Gilna P."/>
            <person name="Schmutz J."/>
            <person name="Larimer F."/>
            <person name="Land M."/>
            <person name="Hauser L."/>
            <person name="Kyrpides N."/>
            <person name="Mikhailova N."/>
            <person name="Richardson P."/>
            <person name="Mackenzie C."/>
            <person name="Choudhary M."/>
            <person name="Donohue T.J."/>
            <person name="Kaplan S."/>
        </authorList>
    </citation>
    <scope>NUCLEOTIDE SEQUENCE [LARGE SCALE GENOMIC DNA]</scope>
    <source>
        <strain>ATCC 17029 / ATH 2.4.9</strain>
    </source>
</reference>
<organism>
    <name type="scientific">Cereibacter sphaeroides (strain ATCC 17029 / ATH 2.4.9)</name>
    <name type="common">Rhodobacter sphaeroides</name>
    <dbReference type="NCBI Taxonomy" id="349101"/>
    <lineage>
        <taxon>Bacteria</taxon>
        <taxon>Pseudomonadati</taxon>
        <taxon>Pseudomonadota</taxon>
        <taxon>Alphaproteobacteria</taxon>
        <taxon>Rhodobacterales</taxon>
        <taxon>Paracoccaceae</taxon>
        <taxon>Cereibacter</taxon>
    </lineage>
</organism>
<protein>
    <recommendedName>
        <fullName evidence="1">Sec-independent protein translocase protein TatB</fullName>
    </recommendedName>
</protein>
<sequence length="158" mass="16249">MFDIGWSELLVIGVVALVVVGPKDLPEMFRTLGRVTAKARNMAREFQRAMEAAADETGVKDVVKDVKNVTSPRSMGLDAMKQAADRFEKWDPMKPQQGAPKPAAPASSIPAAKAQQGAGAAAVTAPPASEPAAPVPQAPAAAAPEAASPAPAEPKSNA</sequence>
<proteinExistence type="inferred from homology"/>
<comment type="function">
    <text evidence="1">Part of the twin-arginine translocation (Tat) system that transports large folded proteins containing a characteristic twin-arginine motif in their signal peptide across membranes. Together with TatC, TatB is part of a receptor directly interacting with Tat signal peptides. TatB may form an oligomeric binding site that transiently accommodates folded Tat precursor proteins before their translocation.</text>
</comment>
<comment type="subunit">
    <text evidence="1">The Tat system comprises two distinct complexes: a TatABC complex, containing multiple copies of TatA, TatB and TatC subunits, and a separate TatA complex, containing only TatA subunits. Substrates initially bind to the TatABC complex, which probably triggers association of the separate TatA complex to form the active translocon.</text>
</comment>
<comment type="subcellular location">
    <subcellularLocation>
        <location evidence="1">Cell inner membrane</location>
        <topology evidence="1">Single-pass membrane protein</topology>
    </subcellularLocation>
</comment>
<comment type="similarity">
    <text evidence="1">Belongs to the TatB family.</text>
</comment>
<evidence type="ECO:0000255" key="1">
    <source>
        <dbReference type="HAMAP-Rule" id="MF_00237"/>
    </source>
</evidence>
<evidence type="ECO:0000256" key="2">
    <source>
        <dbReference type="SAM" id="MobiDB-lite"/>
    </source>
</evidence>